<comment type="function">
    <text evidence="1">One of the primary rRNA binding proteins, it binds directly near the 3'-end of the 23S rRNA, where it nucleates assembly of the 50S subunit.</text>
</comment>
<comment type="subunit">
    <text evidence="1">Part of the 50S ribosomal subunit. Forms a cluster with proteins L14 and L19.</text>
</comment>
<comment type="similarity">
    <text evidence="1">Belongs to the universal ribosomal protein uL3 family.</text>
</comment>
<proteinExistence type="inferred from homology"/>
<reference key="1">
    <citation type="submission" date="2008-06" db="EMBL/GenBank/DDBJ databases">
        <title>Complete sequence of Chlorobium phaeobacteroides BS1.</title>
        <authorList>
            <consortium name="US DOE Joint Genome Institute"/>
            <person name="Lucas S."/>
            <person name="Copeland A."/>
            <person name="Lapidus A."/>
            <person name="Glavina del Rio T."/>
            <person name="Dalin E."/>
            <person name="Tice H."/>
            <person name="Bruce D."/>
            <person name="Goodwin L."/>
            <person name="Pitluck S."/>
            <person name="Schmutz J."/>
            <person name="Larimer F."/>
            <person name="Land M."/>
            <person name="Hauser L."/>
            <person name="Kyrpides N."/>
            <person name="Ovchinnikova G."/>
            <person name="Li T."/>
            <person name="Liu Z."/>
            <person name="Zhao F."/>
            <person name="Overmann J."/>
            <person name="Bryant D.A."/>
            <person name="Richardson P."/>
        </authorList>
    </citation>
    <scope>NUCLEOTIDE SEQUENCE [LARGE SCALE GENOMIC DNA]</scope>
    <source>
        <strain>BS1</strain>
    </source>
</reference>
<evidence type="ECO:0000255" key="1">
    <source>
        <dbReference type="HAMAP-Rule" id="MF_01325"/>
    </source>
</evidence>
<evidence type="ECO:0000256" key="2">
    <source>
        <dbReference type="SAM" id="MobiDB-lite"/>
    </source>
</evidence>
<evidence type="ECO:0000305" key="3"/>
<dbReference type="EMBL" id="CP001101">
    <property type="protein sequence ID" value="ACE05200.1"/>
    <property type="molecule type" value="Genomic_DNA"/>
</dbReference>
<dbReference type="SMR" id="B3EP61"/>
<dbReference type="STRING" id="331678.Cphamn1_2296"/>
<dbReference type="KEGG" id="cpb:Cphamn1_2296"/>
<dbReference type="eggNOG" id="COG0087">
    <property type="taxonomic scope" value="Bacteria"/>
</dbReference>
<dbReference type="HOGENOM" id="CLU_044142_4_1_10"/>
<dbReference type="OrthoDB" id="9806135at2"/>
<dbReference type="GO" id="GO:0022625">
    <property type="term" value="C:cytosolic large ribosomal subunit"/>
    <property type="evidence" value="ECO:0007669"/>
    <property type="project" value="TreeGrafter"/>
</dbReference>
<dbReference type="GO" id="GO:0019843">
    <property type="term" value="F:rRNA binding"/>
    <property type="evidence" value="ECO:0007669"/>
    <property type="project" value="UniProtKB-UniRule"/>
</dbReference>
<dbReference type="GO" id="GO:0003735">
    <property type="term" value="F:structural constituent of ribosome"/>
    <property type="evidence" value="ECO:0007669"/>
    <property type="project" value="InterPro"/>
</dbReference>
<dbReference type="GO" id="GO:0006412">
    <property type="term" value="P:translation"/>
    <property type="evidence" value="ECO:0007669"/>
    <property type="project" value="UniProtKB-UniRule"/>
</dbReference>
<dbReference type="FunFam" id="2.40.30.10:FF:000004">
    <property type="entry name" value="50S ribosomal protein L3"/>
    <property type="match status" value="1"/>
</dbReference>
<dbReference type="FunFam" id="3.30.160.810:FF:000001">
    <property type="entry name" value="50S ribosomal protein L3"/>
    <property type="match status" value="1"/>
</dbReference>
<dbReference type="Gene3D" id="3.30.160.810">
    <property type="match status" value="1"/>
</dbReference>
<dbReference type="Gene3D" id="2.40.30.10">
    <property type="entry name" value="Translation factors"/>
    <property type="match status" value="1"/>
</dbReference>
<dbReference type="HAMAP" id="MF_01325_B">
    <property type="entry name" value="Ribosomal_uL3_B"/>
    <property type="match status" value="1"/>
</dbReference>
<dbReference type="InterPro" id="IPR000597">
    <property type="entry name" value="Ribosomal_uL3"/>
</dbReference>
<dbReference type="InterPro" id="IPR019927">
    <property type="entry name" value="Ribosomal_uL3_bac/org-type"/>
</dbReference>
<dbReference type="InterPro" id="IPR009000">
    <property type="entry name" value="Transl_B-barrel_sf"/>
</dbReference>
<dbReference type="NCBIfam" id="TIGR03625">
    <property type="entry name" value="L3_bact"/>
    <property type="match status" value="1"/>
</dbReference>
<dbReference type="PANTHER" id="PTHR11229">
    <property type="entry name" value="50S RIBOSOMAL PROTEIN L3"/>
    <property type="match status" value="1"/>
</dbReference>
<dbReference type="PANTHER" id="PTHR11229:SF16">
    <property type="entry name" value="LARGE RIBOSOMAL SUBUNIT PROTEIN UL3C"/>
    <property type="match status" value="1"/>
</dbReference>
<dbReference type="Pfam" id="PF00297">
    <property type="entry name" value="Ribosomal_L3"/>
    <property type="match status" value="1"/>
</dbReference>
<dbReference type="SUPFAM" id="SSF50447">
    <property type="entry name" value="Translation proteins"/>
    <property type="match status" value="1"/>
</dbReference>
<accession>B3EP61</accession>
<name>RL3_CHLPB</name>
<protein>
    <recommendedName>
        <fullName evidence="1">Large ribosomal subunit protein uL3</fullName>
    </recommendedName>
    <alternativeName>
        <fullName evidence="3">50S ribosomal protein L3</fullName>
    </alternativeName>
</protein>
<feature type="chain" id="PRO_1000141840" description="Large ribosomal subunit protein uL3">
    <location>
        <begin position="1"/>
        <end position="209"/>
    </location>
</feature>
<feature type="region of interest" description="Disordered" evidence="2">
    <location>
        <begin position="127"/>
        <end position="164"/>
    </location>
</feature>
<sequence length="209" mass="21973">MAAILGKKIGMTSIYNANREAEPCTVIQAGPCFVSQVKTTENDGYEAYQLSIGERKEAKVSKPLRGHFAKAGIAPGYKVVEFGKDDMGLDLEQGSAVSVEIFSAGDAVEVQGVSKGKGFAGVVKRHNFSGGQRTHGQSDRLRAPGSVGGASDPSRTFKGTKMGGRMGGKTVKVKGLEIVKVIPESNLLVIKGSVPGVKNSYVQIVSSKK</sequence>
<organism>
    <name type="scientific">Chlorobium phaeobacteroides (strain BS1)</name>
    <dbReference type="NCBI Taxonomy" id="331678"/>
    <lineage>
        <taxon>Bacteria</taxon>
        <taxon>Pseudomonadati</taxon>
        <taxon>Chlorobiota</taxon>
        <taxon>Chlorobiia</taxon>
        <taxon>Chlorobiales</taxon>
        <taxon>Chlorobiaceae</taxon>
        <taxon>Chlorobium/Pelodictyon group</taxon>
        <taxon>Chlorobium</taxon>
    </lineage>
</organism>
<keyword id="KW-0687">Ribonucleoprotein</keyword>
<keyword id="KW-0689">Ribosomal protein</keyword>
<keyword id="KW-0694">RNA-binding</keyword>
<keyword id="KW-0699">rRNA-binding</keyword>
<gene>
    <name evidence="1" type="primary">rplC</name>
    <name type="ordered locus">Cphamn1_2296</name>
</gene>